<sequence>MEFHDDKKNELQKKEEIITEAIDTLFQSSAFGNLINGFQNLINSSLKDVQTTIHVRERDTGLYIDITIPATFRDGEIVVDVKSRYLHVTLQEKQKHQNEATFTSMTRTVQLPYEVRQEDMETSWNEQTMTLFFPKNKHE</sequence>
<comment type="similarity">
    <text evidence="2">Belongs to the small heat shock protein (HSP20) family.</text>
</comment>
<keyword id="KW-1185">Reference proteome</keyword>
<keyword id="KW-0732">Signal</keyword>
<dbReference type="EMBL" id="L47838">
    <property type="protein sequence ID" value="AAB38466.1"/>
    <property type="molecule type" value="Genomic_DNA"/>
</dbReference>
<dbReference type="EMBL" id="AL009126">
    <property type="protein sequence ID" value="CAB14141.1"/>
    <property type="molecule type" value="Genomic_DNA"/>
</dbReference>
<dbReference type="PIR" id="G69940">
    <property type="entry name" value="G69940"/>
</dbReference>
<dbReference type="RefSeq" id="NP_390106.1">
    <property type="nucleotide sequence ID" value="NC_000964.3"/>
</dbReference>
<dbReference type="RefSeq" id="WP_004398640.1">
    <property type="nucleotide sequence ID" value="NZ_OZ025638.1"/>
</dbReference>
<dbReference type="SMR" id="P50836"/>
<dbReference type="FunCoup" id="P50836">
    <property type="interactions" value="42"/>
</dbReference>
<dbReference type="STRING" id="224308.BSU22240"/>
<dbReference type="PaxDb" id="224308-BSU22240"/>
<dbReference type="EnsemblBacteria" id="CAB14141">
    <property type="protein sequence ID" value="CAB14141"/>
    <property type="gene ID" value="BSU_22240"/>
</dbReference>
<dbReference type="GeneID" id="939048"/>
<dbReference type="KEGG" id="bsu:BSU22240"/>
<dbReference type="PATRIC" id="fig|224308.179.peg.2428"/>
<dbReference type="eggNOG" id="COG0071">
    <property type="taxonomic scope" value="Bacteria"/>
</dbReference>
<dbReference type="InParanoid" id="P50836"/>
<dbReference type="OrthoDB" id="2861611at2"/>
<dbReference type="BioCyc" id="BSUB:BSU22240-MONOMER"/>
<dbReference type="Proteomes" id="UP000001570">
    <property type="component" value="Chromosome"/>
</dbReference>
<dbReference type="CDD" id="cd00298">
    <property type="entry name" value="ACD_sHsps_p23-like"/>
    <property type="match status" value="1"/>
</dbReference>
<dbReference type="Gene3D" id="2.60.40.790">
    <property type="match status" value="1"/>
</dbReference>
<dbReference type="InterPro" id="IPR002068">
    <property type="entry name" value="A-crystallin/Hsp20_dom"/>
</dbReference>
<dbReference type="InterPro" id="IPR008978">
    <property type="entry name" value="HSP20-like_chaperone"/>
</dbReference>
<dbReference type="SUPFAM" id="SSF49764">
    <property type="entry name" value="HSP20-like chaperones"/>
    <property type="match status" value="1"/>
</dbReference>
<dbReference type="PROSITE" id="PS01031">
    <property type="entry name" value="SHSP"/>
    <property type="match status" value="1"/>
</dbReference>
<accession>P50836</accession>
<gene>
    <name type="primary">ypqA</name>
    <name type="ordered locus">BSU22240</name>
</gene>
<protein>
    <recommendedName>
        <fullName>Uncharacterized protein YpqA</fullName>
    </recommendedName>
</protein>
<organism>
    <name type="scientific">Bacillus subtilis (strain 168)</name>
    <dbReference type="NCBI Taxonomy" id="224308"/>
    <lineage>
        <taxon>Bacteria</taxon>
        <taxon>Bacillati</taxon>
        <taxon>Bacillota</taxon>
        <taxon>Bacilli</taxon>
        <taxon>Bacillales</taxon>
        <taxon>Bacillaceae</taxon>
        <taxon>Bacillus</taxon>
    </lineage>
</organism>
<feature type="signal peptide" evidence="1">
    <location>
        <begin position="1"/>
        <end position="32"/>
    </location>
</feature>
<feature type="chain" id="PRO_0000013725" description="Uncharacterized protein YpqA">
    <location>
        <begin position="33"/>
        <end position="139"/>
    </location>
</feature>
<feature type="domain" description="sHSP" evidence="2">
    <location>
        <begin position="44"/>
        <end position="139"/>
    </location>
</feature>
<proteinExistence type="inferred from homology"/>
<reference key="1">
    <citation type="journal article" date="1996" name="Microbiology">
        <title>Sequence analysis of the Bacillus subtilis chromosome region between the serA and kdg loci cloned in a yeast artificial chromosome.</title>
        <authorList>
            <person name="Sorokin A.V."/>
            <person name="Azevedo V."/>
            <person name="Zumstein E."/>
            <person name="Galleron N."/>
            <person name="Ehrlich S.D."/>
            <person name="Serror P."/>
        </authorList>
    </citation>
    <scope>NUCLEOTIDE SEQUENCE [GENOMIC DNA]</scope>
    <source>
        <strain>168 / Marburg / ATCC 6051 / DSM 10 / JCM 1465 / NBRC 13719 / NCIMB 3610 / NRRL NRS-744 / VKM B-501</strain>
    </source>
</reference>
<reference key="2">
    <citation type="journal article" date="1997" name="Nature">
        <title>The complete genome sequence of the Gram-positive bacterium Bacillus subtilis.</title>
        <authorList>
            <person name="Kunst F."/>
            <person name="Ogasawara N."/>
            <person name="Moszer I."/>
            <person name="Albertini A.M."/>
            <person name="Alloni G."/>
            <person name="Azevedo V."/>
            <person name="Bertero M.G."/>
            <person name="Bessieres P."/>
            <person name="Bolotin A."/>
            <person name="Borchert S."/>
            <person name="Borriss R."/>
            <person name="Boursier L."/>
            <person name="Brans A."/>
            <person name="Braun M."/>
            <person name="Brignell S.C."/>
            <person name="Bron S."/>
            <person name="Brouillet S."/>
            <person name="Bruschi C.V."/>
            <person name="Caldwell B."/>
            <person name="Capuano V."/>
            <person name="Carter N.M."/>
            <person name="Choi S.-K."/>
            <person name="Codani J.-J."/>
            <person name="Connerton I.F."/>
            <person name="Cummings N.J."/>
            <person name="Daniel R.A."/>
            <person name="Denizot F."/>
            <person name="Devine K.M."/>
            <person name="Duesterhoeft A."/>
            <person name="Ehrlich S.D."/>
            <person name="Emmerson P.T."/>
            <person name="Entian K.-D."/>
            <person name="Errington J."/>
            <person name="Fabret C."/>
            <person name="Ferrari E."/>
            <person name="Foulger D."/>
            <person name="Fritz C."/>
            <person name="Fujita M."/>
            <person name="Fujita Y."/>
            <person name="Fuma S."/>
            <person name="Galizzi A."/>
            <person name="Galleron N."/>
            <person name="Ghim S.-Y."/>
            <person name="Glaser P."/>
            <person name="Goffeau A."/>
            <person name="Golightly E.J."/>
            <person name="Grandi G."/>
            <person name="Guiseppi G."/>
            <person name="Guy B.J."/>
            <person name="Haga K."/>
            <person name="Haiech J."/>
            <person name="Harwood C.R."/>
            <person name="Henaut A."/>
            <person name="Hilbert H."/>
            <person name="Holsappel S."/>
            <person name="Hosono S."/>
            <person name="Hullo M.-F."/>
            <person name="Itaya M."/>
            <person name="Jones L.-M."/>
            <person name="Joris B."/>
            <person name="Karamata D."/>
            <person name="Kasahara Y."/>
            <person name="Klaerr-Blanchard M."/>
            <person name="Klein C."/>
            <person name="Kobayashi Y."/>
            <person name="Koetter P."/>
            <person name="Koningstein G."/>
            <person name="Krogh S."/>
            <person name="Kumano M."/>
            <person name="Kurita K."/>
            <person name="Lapidus A."/>
            <person name="Lardinois S."/>
            <person name="Lauber J."/>
            <person name="Lazarevic V."/>
            <person name="Lee S.-M."/>
            <person name="Levine A."/>
            <person name="Liu H."/>
            <person name="Masuda S."/>
            <person name="Mauel C."/>
            <person name="Medigue C."/>
            <person name="Medina N."/>
            <person name="Mellado R.P."/>
            <person name="Mizuno M."/>
            <person name="Moestl D."/>
            <person name="Nakai S."/>
            <person name="Noback M."/>
            <person name="Noone D."/>
            <person name="O'Reilly M."/>
            <person name="Ogawa K."/>
            <person name="Ogiwara A."/>
            <person name="Oudega B."/>
            <person name="Park S.-H."/>
            <person name="Parro V."/>
            <person name="Pohl T.M."/>
            <person name="Portetelle D."/>
            <person name="Porwollik S."/>
            <person name="Prescott A.M."/>
            <person name="Presecan E."/>
            <person name="Pujic P."/>
            <person name="Purnelle B."/>
            <person name="Rapoport G."/>
            <person name="Rey M."/>
            <person name="Reynolds S."/>
            <person name="Rieger M."/>
            <person name="Rivolta C."/>
            <person name="Rocha E."/>
            <person name="Roche B."/>
            <person name="Rose M."/>
            <person name="Sadaie Y."/>
            <person name="Sato T."/>
            <person name="Scanlan E."/>
            <person name="Schleich S."/>
            <person name="Schroeter R."/>
            <person name="Scoffone F."/>
            <person name="Sekiguchi J."/>
            <person name="Sekowska A."/>
            <person name="Seror S.J."/>
            <person name="Serror P."/>
            <person name="Shin B.-S."/>
            <person name="Soldo B."/>
            <person name="Sorokin A."/>
            <person name="Tacconi E."/>
            <person name="Takagi T."/>
            <person name="Takahashi H."/>
            <person name="Takemaru K."/>
            <person name="Takeuchi M."/>
            <person name="Tamakoshi A."/>
            <person name="Tanaka T."/>
            <person name="Terpstra P."/>
            <person name="Tognoni A."/>
            <person name="Tosato V."/>
            <person name="Uchiyama S."/>
            <person name="Vandenbol M."/>
            <person name="Vannier F."/>
            <person name="Vassarotti A."/>
            <person name="Viari A."/>
            <person name="Wambutt R."/>
            <person name="Wedler E."/>
            <person name="Wedler H."/>
            <person name="Weitzenegger T."/>
            <person name="Winters P."/>
            <person name="Wipat A."/>
            <person name="Yamamoto H."/>
            <person name="Yamane K."/>
            <person name="Yasumoto K."/>
            <person name="Yata K."/>
            <person name="Yoshida K."/>
            <person name="Yoshikawa H.-F."/>
            <person name="Zumstein E."/>
            <person name="Yoshikawa H."/>
            <person name="Danchin A."/>
        </authorList>
    </citation>
    <scope>NUCLEOTIDE SEQUENCE [LARGE SCALE GENOMIC DNA]</scope>
    <source>
        <strain>168</strain>
    </source>
</reference>
<evidence type="ECO:0000255" key="1"/>
<evidence type="ECO:0000255" key="2">
    <source>
        <dbReference type="PROSITE-ProRule" id="PRU00285"/>
    </source>
</evidence>
<name>YPQA_BACSU</name>